<gene>
    <name type="primary">SE</name>
    <name type="ordered locus">At2g27100</name>
    <name type="ORF">T20P8.15</name>
</gene>
<evidence type="ECO:0000256" key="1">
    <source>
        <dbReference type="SAM" id="MobiDB-lite"/>
    </source>
</evidence>
<evidence type="ECO:0000269" key="2">
    <source>
    </source>
</evidence>
<evidence type="ECO:0000269" key="3">
    <source>
    </source>
</evidence>
<evidence type="ECO:0000269" key="4">
    <source>
    </source>
</evidence>
<evidence type="ECO:0000269" key="5">
    <source>
    </source>
</evidence>
<evidence type="ECO:0000269" key="6">
    <source>
    </source>
</evidence>
<evidence type="ECO:0000269" key="7">
    <source>
    </source>
</evidence>
<evidence type="ECO:0000269" key="8">
    <source>
    </source>
</evidence>
<evidence type="ECO:0000269" key="9">
    <source>
    </source>
</evidence>
<evidence type="ECO:0000269" key="10">
    <source>
    </source>
</evidence>
<evidence type="ECO:0000269" key="11">
    <source>
    </source>
</evidence>
<evidence type="ECO:0000305" key="12"/>
<evidence type="ECO:0007744" key="13">
    <source>
    </source>
</evidence>
<evidence type="ECO:0007744" key="14">
    <source>
    </source>
</evidence>
<evidence type="ECO:0007829" key="15">
    <source>
        <dbReference type="PDB" id="3AX1"/>
    </source>
</evidence>
<feature type="chain" id="PRO_0000385228" description="Serrate RNA effector molecule">
    <location>
        <begin position="1"/>
        <end position="720"/>
    </location>
</feature>
<feature type="zinc finger region" description="C2H2-type">
    <location>
        <begin position="498"/>
        <end position="523"/>
    </location>
</feature>
<feature type="region of interest" description="Disordered" evidence="1">
    <location>
        <begin position="1"/>
        <end position="192"/>
    </location>
</feature>
<feature type="region of interest" description="Disordered" evidence="1">
    <location>
        <begin position="288"/>
        <end position="335"/>
    </location>
</feature>
<feature type="region of interest" description="Disordered" evidence="1">
    <location>
        <begin position="361"/>
        <end position="380"/>
    </location>
</feature>
<feature type="region of interest" description="Disordered" evidence="1">
    <location>
        <begin position="543"/>
        <end position="622"/>
    </location>
</feature>
<feature type="region of interest" description="Disordered" evidence="1">
    <location>
        <begin position="666"/>
        <end position="687"/>
    </location>
</feature>
<feature type="compositionally biased region" description="Low complexity" evidence="1">
    <location>
        <begin position="33"/>
        <end position="47"/>
    </location>
</feature>
<feature type="compositionally biased region" description="Basic and acidic residues" evidence="1">
    <location>
        <begin position="48"/>
        <end position="76"/>
    </location>
</feature>
<feature type="compositionally biased region" description="Basic residues" evidence="1">
    <location>
        <begin position="99"/>
        <end position="115"/>
    </location>
</feature>
<feature type="compositionally biased region" description="Basic and acidic residues" evidence="1">
    <location>
        <begin position="116"/>
        <end position="126"/>
    </location>
</feature>
<feature type="compositionally biased region" description="Basic and acidic residues" evidence="1">
    <location>
        <begin position="136"/>
        <end position="164"/>
    </location>
</feature>
<feature type="compositionally biased region" description="Polar residues" evidence="1">
    <location>
        <begin position="288"/>
        <end position="297"/>
    </location>
</feature>
<feature type="compositionally biased region" description="Basic and acidic residues" evidence="1">
    <location>
        <begin position="368"/>
        <end position="378"/>
    </location>
</feature>
<feature type="compositionally biased region" description="Basic and acidic residues" evidence="1">
    <location>
        <begin position="570"/>
        <end position="607"/>
    </location>
</feature>
<feature type="compositionally biased region" description="Gly residues" evidence="1">
    <location>
        <begin position="608"/>
        <end position="622"/>
    </location>
</feature>
<feature type="modified residue" description="Phosphoserine" evidence="14">
    <location>
        <position position="76"/>
    </location>
</feature>
<feature type="modified residue" description="Phosphoserine" evidence="14">
    <location>
        <position position="90"/>
    </location>
</feature>
<feature type="modified residue" description="Phosphoserine" evidence="14">
    <location>
        <position position="92"/>
    </location>
</feature>
<feature type="modified residue" description="Phosphoserine" evidence="13">
    <location>
        <position position="689"/>
    </location>
</feature>
<feature type="helix" evidence="15">
    <location>
        <begin position="198"/>
        <end position="201"/>
    </location>
</feature>
<feature type="helix" evidence="15">
    <location>
        <begin position="202"/>
        <end position="204"/>
    </location>
</feature>
<feature type="turn" evidence="15">
    <location>
        <begin position="205"/>
        <end position="207"/>
    </location>
</feature>
<feature type="helix" evidence="15">
    <location>
        <begin position="211"/>
        <end position="237"/>
    </location>
</feature>
<feature type="helix" evidence="15">
    <location>
        <begin position="241"/>
        <end position="247"/>
    </location>
</feature>
<feature type="helix" evidence="15">
    <location>
        <begin position="249"/>
        <end position="275"/>
    </location>
</feature>
<feature type="strand" evidence="15">
    <location>
        <begin position="283"/>
        <end position="286"/>
    </location>
</feature>
<feature type="helix" evidence="15">
    <location>
        <begin position="331"/>
        <end position="333"/>
    </location>
</feature>
<feature type="helix" evidence="15">
    <location>
        <begin position="336"/>
        <end position="357"/>
    </location>
</feature>
<feature type="strand" evidence="15">
    <location>
        <begin position="386"/>
        <end position="388"/>
    </location>
</feature>
<feature type="strand" evidence="15">
    <location>
        <begin position="395"/>
        <end position="397"/>
    </location>
</feature>
<feature type="helix" evidence="15">
    <location>
        <begin position="400"/>
        <end position="414"/>
    </location>
</feature>
<feature type="helix" evidence="15">
    <location>
        <begin position="418"/>
        <end position="420"/>
    </location>
</feature>
<feature type="helix" evidence="15">
    <location>
        <begin position="446"/>
        <end position="460"/>
    </location>
</feature>
<feature type="helix" evidence="15">
    <location>
        <begin position="464"/>
        <end position="469"/>
    </location>
</feature>
<feature type="helix" evidence="15">
    <location>
        <begin position="471"/>
        <end position="482"/>
    </location>
</feature>
<feature type="helix" evidence="15">
    <location>
        <begin position="483"/>
        <end position="485"/>
    </location>
</feature>
<feature type="strand" evidence="15">
    <location>
        <begin position="486"/>
        <end position="490"/>
    </location>
</feature>
<feature type="strand" evidence="15">
    <location>
        <begin position="492"/>
        <end position="500"/>
    </location>
</feature>
<feature type="strand" evidence="15">
    <location>
        <begin position="502"/>
        <end position="504"/>
    </location>
</feature>
<feature type="strand" evidence="15">
    <location>
        <begin position="508"/>
        <end position="511"/>
    </location>
</feature>
<feature type="helix" evidence="15">
    <location>
        <begin position="512"/>
        <end position="522"/>
    </location>
</feature>
<feature type="helix" evidence="15">
    <location>
        <begin position="524"/>
        <end position="543"/>
    </location>
</feature>
<reference key="1">
    <citation type="journal article" date="2001" name="Plant Cell">
        <title>The arabidopsis serrate gene encodes a zinc-finger protein required for normal shoot development.</title>
        <authorList>
            <person name="Prigge M.J."/>
            <person name="Wagner D.R."/>
        </authorList>
    </citation>
    <scope>NUCLEOTIDE SEQUENCE [MRNA]</scope>
    <scope>TISSUE SPECIFICITY</scope>
    <scope>DISRUPTION PHENOTYPE</scope>
    <source>
        <strain>cv. Columbia</strain>
    </source>
</reference>
<reference key="2">
    <citation type="journal article" date="1999" name="Nature">
        <title>Sequence and analysis of chromosome 2 of the plant Arabidopsis thaliana.</title>
        <authorList>
            <person name="Lin X."/>
            <person name="Kaul S."/>
            <person name="Rounsley S.D."/>
            <person name="Shea T.P."/>
            <person name="Benito M.-I."/>
            <person name="Town C.D."/>
            <person name="Fujii C.Y."/>
            <person name="Mason T.M."/>
            <person name="Bowman C.L."/>
            <person name="Barnstead M.E."/>
            <person name="Feldblyum T.V."/>
            <person name="Buell C.R."/>
            <person name="Ketchum K.A."/>
            <person name="Lee J.J."/>
            <person name="Ronning C.M."/>
            <person name="Koo H.L."/>
            <person name="Moffat K.S."/>
            <person name="Cronin L.A."/>
            <person name="Shen M."/>
            <person name="Pai G."/>
            <person name="Van Aken S."/>
            <person name="Umayam L."/>
            <person name="Tallon L.J."/>
            <person name="Gill J.E."/>
            <person name="Adams M.D."/>
            <person name="Carrera A.J."/>
            <person name="Creasy T.H."/>
            <person name="Goodman H.M."/>
            <person name="Somerville C.R."/>
            <person name="Copenhaver G.P."/>
            <person name="Preuss D."/>
            <person name="Nierman W.C."/>
            <person name="White O."/>
            <person name="Eisen J.A."/>
            <person name="Salzberg S.L."/>
            <person name="Fraser C.M."/>
            <person name="Venter J.C."/>
        </authorList>
    </citation>
    <scope>NUCLEOTIDE SEQUENCE [LARGE SCALE GENOMIC DNA]</scope>
    <source>
        <strain>cv. Columbia</strain>
    </source>
</reference>
<reference key="3">
    <citation type="journal article" date="2017" name="Plant J.">
        <title>Araport11: a complete reannotation of the Arabidopsis thaliana reference genome.</title>
        <authorList>
            <person name="Cheng C.Y."/>
            <person name="Krishnakumar V."/>
            <person name="Chan A.P."/>
            <person name="Thibaud-Nissen F."/>
            <person name="Schobel S."/>
            <person name="Town C.D."/>
        </authorList>
    </citation>
    <scope>GENOME REANNOTATION</scope>
    <source>
        <strain>cv. Columbia</strain>
    </source>
</reference>
<reference key="4">
    <citation type="journal article" date="2003" name="Science">
        <title>Empirical analysis of transcriptional activity in the Arabidopsis genome.</title>
        <authorList>
            <person name="Yamada K."/>
            <person name="Lim J."/>
            <person name="Dale J.M."/>
            <person name="Chen H."/>
            <person name="Shinn P."/>
            <person name="Palm C.J."/>
            <person name="Southwick A.M."/>
            <person name="Wu H.C."/>
            <person name="Kim C.J."/>
            <person name="Nguyen M."/>
            <person name="Pham P.K."/>
            <person name="Cheuk R.F."/>
            <person name="Karlin-Newmann G."/>
            <person name="Liu S.X."/>
            <person name="Lam B."/>
            <person name="Sakano H."/>
            <person name="Wu T."/>
            <person name="Yu G."/>
            <person name="Miranda M."/>
            <person name="Quach H.L."/>
            <person name="Tripp M."/>
            <person name="Chang C.H."/>
            <person name="Lee J.M."/>
            <person name="Toriumi M.J."/>
            <person name="Chan M.M."/>
            <person name="Tang C.C."/>
            <person name="Onodera C.S."/>
            <person name="Deng J.M."/>
            <person name="Akiyama K."/>
            <person name="Ansari Y."/>
            <person name="Arakawa T."/>
            <person name="Banh J."/>
            <person name="Banno F."/>
            <person name="Bowser L."/>
            <person name="Brooks S.Y."/>
            <person name="Carninci P."/>
            <person name="Chao Q."/>
            <person name="Choy N."/>
            <person name="Enju A."/>
            <person name="Goldsmith A.D."/>
            <person name="Gurjal M."/>
            <person name="Hansen N.F."/>
            <person name="Hayashizaki Y."/>
            <person name="Johnson-Hopson C."/>
            <person name="Hsuan V.W."/>
            <person name="Iida K."/>
            <person name="Karnes M."/>
            <person name="Khan S."/>
            <person name="Koesema E."/>
            <person name="Ishida J."/>
            <person name="Jiang P.X."/>
            <person name="Jones T."/>
            <person name="Kawai J."/>
            <person name="Kamiya A."/>
            <person name="Meyers C."/>
            <person name="Nakajima M."/>
            <person name="Narusaka M."/>
            <person name="Seki M."/>
            <person name="Sakurai T."/>
            <person name="Satou M."/>
            <person name="Tamse R."/>
            <person name="Vaysberg M."/>
            <person name="Wallender E.K."/>
            <person name="Wong C."/>
            <person name="Yamamura Y."/>
            <person name="Yuan S."/>
            <person name="Shinozaki K."/>
            <person name="Davis R.W."/>
            <person name="Theologis A."/>
            <person name="Ecker J.R."/>
        </authorList>
    </citation>
    <scope>NUCLEOTIDE SEQUENCE [LARGE SCALE MRNA]</scope>
    <source>
        <strain>cv. Columbia</strain>
    </source>
</reference>
<reference key="5">
    <citation type="journal article" date="2005" name="Nature">
        <title>SERRATE coordinates shoot meristem function and leaf axial patterning in Arabidopsis.</title>
        <authorList>
            <person name="Grigg S.P."/>
            <person name="Canales C."/>
            <person name="Hay A."/>
            <person name="Tsiantis M."/>
        </authorList>
    </citation>
    <scope>FUNCTION</scope>
</reference>
<reference key="6">
    <citation type="journal article" date="2006" name="EMBO Rep.">
        <title>SERRATE: a new player on the plant microRNA scene.</title>
        <authorList>
            <person name="Lobbes D."/>
            <person name="Rallapalli G."/>
            <person name="Schmidt D.D."/>
            <person name="Martin C."/>
            <person name="Clarke J."/>
        </authorList>
    </citation>
    <scope>FUNCTION</scope>
    <scope>INTERACTION WITH HYL1</scope>
    <scope>DISRUPTION PHENOTYPE</scope>
</reference>
<reference key="7">
    <citation type="journal article" date="2006" name="Plant J.">
        <title>SERRATE is a novel nuclear regulator in primary microRNA processing in Arabidopsis.</title>
        <authorList>
            <person name="Yang L."/>
            <person name="Liu Z."/>
            <person name="Lu F."/>
            <person name="Dong A."/>
            <person name="Huang H."/>
        </authorList>
    </citation>
    <scope>FUNCTION</scope>
    <scope>SUBCELLULAR LOCATION</scope>
    <scope>INTERACTION WITH HYL1</scope>
</reference>
<reference key="8">
    <citation type="journal article" date="2007" name="Curr. Biol.">
        <title>Identification of nuclear dicing bodies containing proteins for microRNA biogenesis in living Arabidopsis plants.</title>
        <authorList>
            <person name="Fang Y."/>
            <person name="Spector D.L."/>
        </authorList>
    </citation>
    <scope>SUBCELLULAR LOCATION</scope>
</reference>
<reference key="9">
    <citation type="journal article" date="2007" name="Plant Cell Physiol.">
        <title>Location of a possible miRNA processing site in SmD3/SmB nuclear bodies in Arabidopsis.</title>
        <authorList>
            <person name="Fujioka Y."/>
            <person name="Utsumi M."/>
            <person name="Ohba Y."/>
            <person name="Watanabe Y."/>
        </authorList>
    </citation>
    <scope>SUBCELLULAR LOCATION</scope>
</reference>
<reference key="10">
    <citation type="journal article" date="2008" name="Proc. Natl. Acad. Sci. U.S.A.">
        <title>The RNA-binding proteins HYL1 and SE promote accurate in vitro processing of pri-miRNA by DCL1.</title>
        <authorList>
            <person name="Dong Z."/>
            <person name="Han M.-H."/>
            <person name="Fedoroff N."/>
        </authorList>
    </citation>
    <scope>FUNCTION</scope>
</reference>
<reference key="11">
    <citation type="journal article" date="2008" name="Proc. Natl. Acad. Sci. U.S.A.">
        <title>Dual roles of the nuclear cap-binding complex and SERRATE in pre-mRNA splicing and microRNA processing in Arabidopsis thaliana.</title>
        <authorList>
            <person name="Laubinger S."/>
            <person name="Sachsenberg T."/>
            <person name="Zeller G."/>
            <person name="Busch W."/>
            <person name="Lohmann J.U."/>
            <person name="Raetsch G."/>
            <person name="Weigel D."/>
        </authorList>
    </citation>
    <scope>FUNCTION</scope>
</reference>
<reference key="12">
    <citation type="journal article" date="2009" name="J. Proteomics">
        <title>Phosphoproteomic analysis of nuclei-enriched fractions from Arabidopsis thaliana.</title>
        <authorList>
            <person name="Jones A.M.E."/>
            <person name="MacLean D."/>
            <person name="Studholme D.J."/>
            <person name="Serna-Sanz A."/>
            <person name="Andreasson E."/>
            <person name="Rathjen J.P."/>
            <person name="Peck S.C."/>
        </authorList>
    </citation>
    <scope>SUBCELLULAR LOCATION</scope>
    <scope>PHOSPHORYLATION [LARGE SCALE ANALYSIS] AT SER-689</scope>
    <scope>IDENTIFICATION BY MASS SPECTROMETRY [LARGE SCALE ANALYSIS]</scope>
    <source>
        <strain>cv. Columbia</strain>
    </source>
</reference>
<reference key="13">
    <citation type="journal article" date="2009" name="Plant Physiol.">
        <title>Large-scale Arabidopsis phosphoproteome profiling reveals novel chloroplast kinase substrates and phosphorylation networks.</title>
        <authorList>
            <person name="Reiland S."/>
            <person name="Messerli G."/>
            <person name="Baerenfaller K."/>
            <person name="Gerrits B."/>
            <person name="Endler A."/>
            <person name="Grossmann J."/>
            <person name="Gruissem W."/>
            <person name="Baginsky S."/>
        </authorList>
    </citation>
    <scope>PHOSPHORYLATION [LARGE SCALE ANALYSIS] AT SER-76; SER-90 AND SER-92</scope>
    <scope>IDENTIFICATION BY MASS SPECTROMETRY [LARGE SCALE ANALYSIS]</scope>
</reference>
<reference key="14">
    <citation type="journal article" date="2015" name="Nucleic Acids Res.">
        <title>The RNA-binding protein HOS5 and serine/arginine-rich proteins RS40 and RS41 participate in miRNA biogenesis in Arabidopsis.</title>
        <authorList>
            <person name="Chen T."/>
            <person name="Cui P."/>
            <person name="Xiong L."/>
        </authorList>
    </citation>
    <scope>INTERACTION WITH RCF3; RS40 AND RS41</scope>
    <scope>SUBCELLULAR LOCATION</scope>
</reference>
<reference key="15">
    <citation type="journal article" date="2011" name="Nucleic Acids Res.">
        <title>Molecular insights into miRNA processing by Arabidopsis thaliana SERRATE.</title>
        <authorList>
            <person name="Machida S."/>
            <person name="Chen H.Y."/>
            <person name="Adam Yuan Y."/>
        </authorList>
    </citation>
    <scope>X-RAY CRYSTALLOGRAPHY (2.74 ANGSTROMS) OF 194-543</scope>
</reference>
<name>SRRT_ARATH</name>
<organism>
    <name type="scientific">Arabidopsis thaliana</name>
    <name type="common">Mouse-ear cress</name>
    <dbReference type="NCBI Taxonomy" id="3702"/>
    <lineage>
        <taxon>Eukaryota</taxon>
        <taxon>Viridiplantae</taxon>
        <taxon>Streptophyta</taxon>
        <taxon>Embryophyta</taxon>
        <taxon>Tracheophyta</taxon>
        <taxon>Spermatophyta</taxon>
        <taxon>Magnoliopsida</taxon>
        <taxon>eudicotyledons</taxon>
        <taxon>Gunneridae</taxon>
        <taxon>Pentapetalae</taxon>
        <taxon>rosids</taxon>
        <taxon>malvids</taxon>
        <taxon>Brassicales</taxon>
        <taxon>Brassicaceae</taxon>
        <taxon>Camelineae</taxon>
        <taxon>Arabidopsis</taxon>
    </lineage>
</organism>
<dbReference type="EMBL" id="AF311221">
    <property type="protein sequence ID" value="AAK63206.1"/>
    <property type="molecule type" value="mRNA"/>
</dbReference>
<dbReference type="EMBL" id="AC005623">
    <property type="protein sequence ID" value="AAC77868.2"/>
    <property type="molecule type" value="Genomic_DNA"/>
</dbReference>
<dbReference type="EMBL" id="CP002685">
    <property type="protein sequence ID" value="AEC07936.1"/>
    <property type="molecule type" value="Genomic_DNA"/>
</dbReference>
<dbReference type="EMBL" id="AF428305">
    <property type="protein sequence ID" value="AAL16137.1"/>
    <property type="molecule type" value="mRNA"/>
</dbReference>
<dbReference type="EMBL" id="AY039915">
    <property type="protein sequence ID" value="AAK64019.1"/>
    <property type="molecule type" value="mRNA"/>
</dbReference>
<dbReference type="EMBL" id="AY142569">
    <property type="protein sequence ID" value="AAN13138.1"/>
    <property type="molecule type" value="mRNA"/>
</dbReference>
<dbReference type="EMBL" id="AY143937">
    <property type="protein sequence ID" value="AAN28876.1"/>
    <property type="molecule type" value="mRNA"/>
</dbReference>
<dbReference type="PIR" id="G84668">
    <property type="entry name" value="G84668"/>
</dbReference>
<dbReference type="RefSeq" id="NP_565635.1">
    <property type="nucleotide sequence ID" value="NM_128268.3"/>
</dbReference>
<dbReference type="PDB" id="3AX1">
    <property type="method" value="X-ray"/>
    <property type="resolution" value="2.74 A"/>
    <property type="chains" value="A=194-543"/>
</dbReference>
<dbReference type="PDBsum" id="3AX1"/>
<dbReference type="SMR" id="Q9ZVD0"/>
<dbReference type="BioGRID" id="2604">
    <property type="interactions" value="13"/>
</dbReference>
<dbReference type="DIP" id="DIP-58979N"/>
<dbReference type="FunCoup" id="Q9ZVD0">
    <property type="interactions" value="4403"/>
</dbReference>
<dbReference type="IntAct" id="Q9ZVD0">
    <property type="interactions" value="5"/>
</dbReference>
<dbReference type="STRING" id="3702.Q9ZVD0"/>
<dbReference type="iPTMnet" id="Q9ZVD0"/>
<dbReference type="PaxDb" id="3702-AT2G27100.1"/>
<dbReference type="ProteomicsDB" id="226823"/>
<dbReference type="EnsemblPlants" id="AT2G27100.1">
    <property type="protein sequence ID" value="AT2G27100.1"/>
    <property type="gene ID" value="AT2G27100"/>
</dbReference>
<dbReference type="GeneID" id="817252"/>
<dbReference type="Gramene" id="AT2G27100.1">
    <property type="protein sequence ID" value="AT2G27100.1"/>
    <property type="gene ID" value="AT2G27100"/>
</dbReference>
<dbReference type="KEGG" id="ath:AT2G27100"/>
<dbReference type="Araport" id="AT2G27100"/>
<dbReference type="TAIR" id="AT2G27100">
    <property type="gene designation" value="SE"/>
</dbReference>
<dbReference type="eggNOG" id="KOG2295">
    <property type="taxonomic scope" value="Eukaryota"/>
</dbReference>
<dbReference type="HOGENOM" id="CLU_021946_1_0_1"/>
<dbReference type="InParanoid" id="Q9ZVD0"/>
<dbReference type="OMA" id="CIDMGDI"/>
<dbReference type="OrthoDB" id="342064at2759"/>
<dbReference type="PhylomeDB" id="Q9ZVD0"/>
<dbReference type="CD-CODE" id="4299E36E">
    <property type="entry name" value="Nucleolus"/>
</dbReference>
<dbReference type="CD-CODE" id="E1C65F8A">
    <property type="entry name" value="Nuclear dicing body"/>
</dbReference>
<dbReference type="EvolutionaryTrace" id="Q9ZVD0"/>
<dbReference type="PRO" id="PR:Q9ZVD0"/>
<dbReference type="Proteomes" id="UP000006548">
    <property type="component" value="Chromosome 2"/>
</dbReference>
<dbReference type="ExpressionAtlas" id="Q9ZVD0">
    <property type="expression patterns" value="baseline and differential"/>
</dbReference>
<dbReference type="GO" id="GO:0005846">
    <property type="term" value="C:nuclear cap binding complex"/>
    <property type="evidence" value="ECO:0000353"/>
    <property type="project" value="TAIR"/>
</dbReference>
<dbReference type="GO" id="GO:0010445">
    <property type="term" value="C:nuclear dicing body"/>
    <property type="evidence" value="ECO:0000314"/>
    <property type="project" value="UniProtKB"/>
</dbReference>
<dbReference type="GO" id="GO:0016607">
    <property type="term" value="C:nuclear speck"/>
    <property type="evidence" value="ECO:0000314"/>
    <property type="project" value="TAIR"/>
</dbReference>
<dbReference type="GO" id="GO:0005730">
    <property type="term" value="C:nucleolus"/>
    <property type="evidence" value="ECO:0007005"/>
    <property type="project" value="TAIR"/>
</dbReference>
<dbReference type="GO" id="GO:0005634">
    <property type="term" value="C:nucleus"/>
    <property type="evidence" value="ECO:0000250"/>
    <property type="project" value="TAIR"/>
</dbReference>
<dbReference type="GO" id="GO:0003677">
    <property type="term" value="F:DNA binding"/>
    <property type="evidence" value="ECO:0000250"/>
    <property type="project" value="TAIR"/>
</dbReference>
<dbReference type="GO" id="GO:0003700">
    <property type="term" value="F:DNA-binding transcription factor activity"/>
    <property type="evidence" value="ECO:0000250"/>
    <property type="project" value="TAIR"/>
</dbReference>
<dbReference type="GO" id="GO:0008270">
    <property type="term" value="F:zinc ion binding"/>
    <property type="evidence" value="ECO:0007669"/>
    <property type="project" value="UniProtKB-KW"/>
</dbReference>
<dbReference type="GO" id="GO:0006397">
    <property type="term" value="P:mRNA processing"/>
    <property type="evidence" value="ECO:0007669"/>
    <property type="project" value="UniProtKB-KW"/>
</dbReference>
<dbReference type="GO" id="GO:0031053">
    <property type="term" value="P:primary miRNA processing"/>
    <property type="evidence" value="ECO:0000315"/>
    <property type="project" value="UniProtKB"/>
</dbReference>
<dbReference type="GO" id="GO:2000011">
    <property type="term" value="P:regulation of adaxial/abaxial pattern formation"/>
    <property type="evidence" value="ECO:0000315"/>
    <property type="project" value="TAIR"/>
</dbReference>
<dbReference type="GO" id="GO:0000381">
    <property type="term" value="P:regulation of alternative mRNA splicing, via spliceosome"/>
    <property type="evidence" value="ECO:0000315"/>
    <property type="project" value="TAIR"/>
</dbReference>
<dbReference type="GO" id="GO:0006355">
    <property type="term" value="P:regulation of DNA-templated transcription"/>
    <property type="evidence" value="ECO:0000304"/>
    <property type="project" value="TAIR"/>
</dbReference>
<dbReference type="GO" id="GO:0048509">
    <property type="term" value="P:regulation of meristem development"/>
    <property type="evidence" value="ECO:0000315"/>
    <property type="project" value="TAIR"/>
</dbReference>
<dbReference type="GO" id="GO:0008380">
    <property type="term" value="P:RNA splicing"/>
    <property type="evidence" value="ECO:0000315"/>
    <property type="project" value="UniProtKB"/>
</dbReference>
<dbReference type="GO" id="GO:0048367">
    <property type="term" value="P:shoot system development"/>
    <property type="evidence" value="ECO:0000315"/>
    <property type="project" value="TAIR"/>
</dbReference>
<dbReference type="GO" id="GO:0010267">
    <property type="term" value="P:ta-siRNA processing"/>
    <property type="evidence" value="ECO:0000315"/>
    <property type="project" value="TAIR"/>
</dbReference>
<dbReference type="DisProt" id="DP02392"/>
<dbReference type="InterPro" id="IPR039727">
    <property type="entry name" value="SE/Ars2"/>
</dbReference>
<dbReference type="InterPro" id="IPR007042">
    <property type="entry name" value="SERRATE/Ars2_C"/>
</dbReference>
<dbReference type="InterPro" id="IPR021933">
    <property type="entry name" value="SERRATE/Ars2_N"/>
</dbReference>
<dbReference type="InterPro" id="IPR013087">
    <property type="entry name" value="Znf_C2H2_type"/>
</dbReference>
<dbReference type="PANTHER" id="PTHR13165">
    <property type="entry name" value="ARSENITE-RESISTANCE PROTEIN 2"/>
    <property type="match status" value="1"/>
</dbReference>
<dbReference type="PANTHER" id="PTHR13165:SF0">
    <property type="entry name" value="SERRATE RNA EFFECTOR MOLECULE HOMOLOG"/>
    <property type="match status" value="1"/>
</dbReference>
<dbReference type="Pfam" id="PF04959">
    <property type="entry name" value="ARS2"/>
    <property type="match status" value="1"/>
</dbReference>
<dbReference type="Pfam" id="PF12066">
    <property type="entry name" value="SERRATE_Ars2_N"/>
    <property type="match status" value="1"/>
</dbReference>
<dbReference type="PROSITE" id="PS00028">
    <property type="entry name" value="ZINC_FINGER_C2H2_1"/>
    <property type="match status" value="1"/>
</dbReference>
<comment type="function">
    <text evidence="3 4 5 8 9">Acts as a mediator between the cap-binding complex (CBC) and both the pre-mRNA splicing and primary microRNAs (miRNAs) processing machinery. Required for proper processing of primary miRNAs to miRNAs, thereby playing a role in RNA-mediated gene silencing (RNAi) by miRNAs. Does not participate in sense post-transcriptional gene silencing. Acts as a regulator of meristem activity and adaxial leaf fate via the miRNA gene-silencing pathway by regulating the expression of PHB and by limiting the competence of shoot tissue to respond to KNOX expression. Its function is however not limited to miRNA-mediated repression of leaf polarity genes, but rather acts as a general regulator of primary microRNAs processing. Also critical for the accumulation of the trans-acting small interfering RNA (ta-siRNA). Required for pre-mRNA splicing.</text>
</comment>
<comment type="subunit">
    <text evidence="4 5 11">Interacts with HYL1 (PubMed:16889646, PubMed:16977334). Interacts with RCF3, RS40 and RS41 (PubMed:26227967).</text>
</comment>
<comment type="interaction">
    <interactant intactId="EBI-6553299">
        <id>Q9ZVD0</id>
    </interactant>
    <interactant intactId="EBI-2025535">
        <id>Q6EVK6</id>
        <label>BRM</label>
    </interactant>
    <organismsDiffer>false</organismsDiffer>
    <experiments>6</experiments>
</comment>
<comment type="interaction">
    <interactant intactId="EBI-6553299">
        <id>Q9ZVD0</id>
    </interactant>
    <interactant intactId="EBI-1786459">
        <id>Q5YDB6</id>
        <label>CPL1</label>
    </interactant>
    <organismsDiffer>false</organismsDiffer>
    <experiments>7</experiments>
</comment>
<comment type="interaction">
    <interactant intactId="EBI-6553299">
        <id>Q9ZVD0</id>
    </interactant>
    <interactant intactId="EBI-632620">
        <id>O04492</id>
        <label>DRB1</label>
    </interactant>
    <organismsDiffer>false</organismsDiffer>
    <experiments>7</experiments>
</comment>
<comment type="subcellular location">
    <subcellularLocation>
        <location evidence="4 6 7 10">Nucleus</location>
    </subcellularLocation>
    <subcellularLocation>
        <location evidence="11">Nucleus speckle</location>
    </subcellularLocation>
    <text>Localizes to nuclear dicing body (also named D body), a nuclear body distributed throughout the nucleoplasm involved in miRNA processing.</text>
</comment>
<comment type="tissue specificity">
    <text evidence="2">Expressed in shoot meristems and in emerging organ primordia throughout development.</text>
</comment>
<comment type="disruption phenotype">
    <text evidence="2 5">Death during embryogenesis. Weaker mutants (se-1, se-2 and se-3) also exist. Mutant se-1 displays defects in shoot and leaf development. Mutants se-2 and se-3 show adaxial leaf curling, loss of asymmetric differentiation of abaxial and adaxial cell types and development of trumpet-shaped or radial leaves. Vascular polarity of se-3 leaves is also perturbed, with xylem elements forming both adaxially and abaxially in the vascular bundle.</text>
</comment>
<comment type="similarity">
    <text evidence="12">Belongs to the ARS2 family.</text>
</comment>
<accession>Q9ZVD0</accession>
<accession>Q93W84</accession>
<keyword id="KW-0002">3D-structure</keyword>
<keyword id="KW-0479">Metal-binding</keyword>
<keyword id="KW-0507">mRNA processing</keyword>
<keyword id="KW-0508">mRNA splicing</keyword>
<keyword id="KW-0539">Nucleus</keyword>
<keyword id="KW-0597">Phosphoprotein</keyword>
<keyword id="KW-1185">Reference proteome</keyword>
<keyword id="KW-0943">RNA-mediated gene silencing</keyword>
<keyword id="KW-0862">Zinc</keyword>
<keyword id="KW-0863">Zinc-finger</keyword>
<sequence length="720" mass="81098">MADVNLPPSDSVDNRLPEKSTSSSPPPPPPSSSLPQQEQEQDQQQLPLRRERDSRERRDERDIERPPPNRRERDRSPLPPPRRDYKRRPSLSPPPPYRDRRHSPPQRRSPPQKRYRRDDNGYDGRRGSPRGGYGPPDRRFGYDHGGGYDREMGGRPGYGDERPHGRFMGRYQDWEGGRGGYGDASNSGNPQRDGLMSYKQFIQELEDDILPSEAERRYQEYKSEYITTQKRAFFNTHKEEDWLKNKYHPTNLLSVIERRNDLAQKVAKDFLLDLQSGTLDLGPAVTALNKSGRTSEPNSEDEAAGVGKRKRHGMGGAKENELLSAAPKAPSFTSDPKRILTDVEQTQALVRKLDSEKKIEENVLQGSETEKSGREKLHSGSTGPVVIIRGLTSVKGLEGVELLDTLVTYLWRVHGLDYYGKVETNEAKGLRHVRAEGKVSDAKGDENESKFDSHWQERLKGQDPLEVMAAKEKIDAAATEALDPHVRKIRDEKYGWKYGCGAKGCTKLFHAAEFVYKHLKLKHTELVTELTTKVREELYFQNYMNDPNAPGGQPATQQSGPRDRPIRRKPSMENRLRDDRGGRRERDGRANGNDRNDRSEDQQRGDNDGGNPGEVGYDAFGGQGGVHVPPFLSDINPPPMLMPVPGAGPLGPFVPAPPEVAMQMFRDPSGPNPPFEGSGRGGPAPFLLSPAFRQDPRRLRSYQDLDAPEEEVTVIDYRSL</sequence>
<proteinExistence type="evidence at protein level"/>
<protein>
    <recommendedName>
        <fullName>Serrate RNA effector molecule</fullName>
    </recommendedName>
</protein>